<comment type="function">
    <text evidence="6 7 8 10 11">Stress-activated kinase involved in tolerance to glucose starvation. Induces cell-cell detachment by increasing F-actin conversion to G-actin. Expression is induced by CD95 or TNF-alpha, via NF-kappa-B. Protects cells from CD95-mediated apoptosis and is required for the increased motility and invasiveness of CD95-activated tumor cells. Phosphorylates LATS1 and LATS2. Plays a key role in neural tube closure during embryonic development through LATS2 phosphorylation and regulation of the nuclear localization of YAP1 a critical downstream regulatory target in the Hippo signaling pathway (PubMed:32845958).</text>
</comment>
<comment type="catalytic activity">
    <reaction evidence="6 7">
        <text>L-seryl-[protein] + ATP = O-phospho-L-seryl-[protein] + ADP + H(+)</text>
        <dbReference type="Rhea" id="RHEA:17989"/>
        <dbReference type="Rhea" id="RHEA-COMP:9863"/>
        <dbReference type="Rhea" id="RHEA-COMP:11604"/>
        <dbReference type="ChEBI" id="CHEBI:15378"/>
        <dbReference type="ChEBI" id="CHEBI:29999"/>
        <dbReference type="ChEBI" id="CHEBI:30616"/>
        <dbReference type="ChEBI" id="CHEBI:83421"/>
        <dbReference type="ChEBI" id="CHEBI:456216"/>
        <dbReference type="EC" id="2.7.11.1"/>
    </reaction>
</comment>
<comment type="catalytic activity">
    <reaction evidence="6 7">
        <text>L-threonyl-[protein] + ATP = O-phospho-L-threonyl-[protein] + ADP + H(+)</text>
        <dbReference type="Rhea" id="RHEA:46608"/>
        <dbReference type="Rhea" id="RHEA-COMP:11060"/>
        <dbReference type="Rhea" id="RHEA-COMP:11605"/>
        <dbReference type="ChEBI" id="CHEBI:15378"/>
        <dbReference type="ChEBI" id="CHEBI:30013"/>
        <dbReference type="ChEBI" id="CHEBI:30616"/>
        <dbReference type="ChEBI" id="CHEBI:61977"/>
        <dbReference type="ChEBI" id="CHEBI:456216"/>
        <dbReference type="EC" id="2.7.11.1"/>
    </reaction>
</comment>
<comment type="cofactor">
    <cofactor evidence="6 7">
        <name>Mg(2+)</name>
        <dbReference type="ChEBI" id="CHEBI:18420"/>
    </cofactor>
</comment>
<comment type="activity regulation">
    <text evidence="7">Activated by phosphorylation on Thr-208.</text>
</comment>
<comment type="interaction">
    <interactant intactId="EBI-1181722">
        <id>Q9H093</id>
    </interactant>
    <interactant intactId="EBI-717919">
        <id>Q4V328</id>
        <label>GRIPAP1</label>
    </interactant>
    <organismsDiffer>false</organismsDiffer>
    <experiments>3</experiments>
</comment>
<comment type="interaction">
    <interactant intactId="EBI-1181722">
        <id>Q9H093</id>
    </interactant>
    <interactant intactId="EBI-476295">
        <id>P31947</id>
        <label>SFN</label>
    </interactant>
    <organismsDiffer>false</organismsDiffer>
    <experiments>2</experiments>
</comment>
<comment type="interaction">
    <interactant intactId="EBI-1181722">
        <id>Q9H093</id>
    </interactant>
    <interactant intactId="EBI-356498">
        <id>P62258</id>
        <label>YWHAE</label>
    </interactant>
    <organismsDiffer>false</organismsDiffer>
    <experiments>2</experiments>
</comment>
<comment type="PTM">
    <text evidence="7 11">Phosphorylated at Thr-208 by STK11/LKB1 in complex with STE20-related adapter-alpha (STRADA) pseudo kinase and CAB39 (PubMed:14976552). Autophosphorylation is also possible at Thr-208 (PubMed:32845958).</text>
</comment>
<comment type="disease" evidence="11">
    <disease id="DI-06156">
        <name>Anencephaly 2</name>
        <acronym>ANPH2</acronym>
        <description>A form of anencephaly, an extreme neural tube defect resulting in the absence of brain tissues, and death in utero or perinatally. Infants are born with intact spinal cords, cerebellums, and brainstems, but lack formation of neural structures above this level. The skull is only partially formed. ANPH2 features may also include frontonasal dysplasia with midline cleft of the upper lip and alveolar ridge, bifid nose, and clinical anophthalmia. ANPH2 inheritance is autosomal recessive.</description>
        <dbReference type="MIM" id="619452"/>
    </disease>
    <text>The disease is caused by variants affecting the gene represented in this entry.</text>
</comment>
<comment type="similarity">
    <text evidence="12">Belongs to the protein kinase superfamily. CAMK Ser/Thr protein kinase family. SNF1 subfamily.</text>
</comment>
<proteinExistence type="evidence at protein level"/>
<feature type="chain" id="PRO_0000247756" description="NUAK family SNF1-like kinase 2">
    <location>
        <begin position="1"/>
        <end position="628"/>
    </location>
</feature>
<feature type="domain" description="Protein kinase" evidence="3">
    <location>
        <begin position="53"/>
        <end position="303"/>
    </location>
</feature>
<feature type="region of interest" description="Disordered" evidence="5">
    <location>
        <begin position="355"/>
        <end position="493"/>
    </location>
</feature>
<feature type="region of interest" description="Disordered" evidence="5">
    <location>
        <begin position="531"/>
        <end position="562"/>
    </location>
</feature>
<feature type="compositionally biased region" description="Low complexity" evidence="5">
    <location>
        <begin position="457"/>
        <end position="469"/>
    </location>
</feature>
<feature type="active site" description="Proton acceptor" evidence="1 3 4">
    <location>
        <position position="175"/>
    </location>
</feature>
<feature type="binding site" evidence="1 3">
    <location>
        <begin position="59"/>
        <end position="67"/>
    </location>
    <ligand>
        <name>ATP</name>
        <dbReference type="ChEBI" id="CHEBI:30616"/>
    </ligand>
</feature>
<feature type="binding site" evidence="3 8">
    <location>
        <position position="81"/>
    </location>
    <ligand>
        <name>ATP</name>
        <dbReference type="ChEBI" id="CHEBI:30616"/>
    </ligand>
</feature>
<feature type="modified residue" description="N-acetylmethionine" evidence="17">
    <location>
        <position position="1"/>
    </location>
</feature>
<feature type="modified residue" description="Phosphothreonine; by LKB1" evidence="7 11">
    <location>
        <position position="208"/>
    </location>
</feature>
<feature type="modified residue" description="Phosphoserine" evidence="16">
    <location>
        <position position="435"/>
    </location>
</feature>
<feature type="modified residue" description="Phosphoserine" evidence="16">
    <location>
        <position position="523"/>
    </location>
</feature>
<feature type="modified residue" description="Phosphoserine" evidence="16">
    <location>
        <position position="544"/>
    </location>
</feature>
<feature type="modified residue" description="Phosphoserine" evidence="16">
    <location>
        <position position="547"/>
    </location>
</feature>
<feature type="modified residue" description="Phosphoserine" evidence="2">
    <location>
        <position position="573"/>
    </location>
</feature>
<feature type="sequence variant" id="VAR_086106" description="In ANPH2; no effect on protein abundance; loss of protein serine/threonine kinase activity; loss of autophosphorylation at T-208; loss of function in regulation of hippo signaling." evidence="11">
    <original>YDYISERQ</original>
    <variation>E</variation>
    <location>
        <begin position="138"/>
        <end position="145"/>
    </location>
</feature>
<feature type="sequence variant" id="VAR_040964" description="In dbSNP:rs55745939." evidence="9">
    <original>T</original>
    <variation>S</variation>
    <location>
        <position position="309"/>
    </location>
</feature>
<feature type="sequence variant" id="VAR_040965" description="In dbSNP:rs35208615." evidence="9">
    <original>R</original>
    <variation>L</variation>
    <location>
        <position position="341"/>
    </location>
</feature>
<feature type="sequence variant" id="VAR_040966" description="In an ovarian Endometrioid carcinoma sample; somatic mutation; dbSNP:rs1271546767." evidence="9">
    <original>K</original>
    <variation>R</variation>
    <location>
        <position position="503"/>
    </location>
</feature>
<feature type="sequence variant" id="VAR_040967" description="In dbSNP:rs35070935." evidence="9">
    <original>A</original>
    <variation>V</variation>
    <location>
        <position position="516"/>
    </location>
</feature>
<feature type="sequence variant" id="VAR_040968" description="In a breast pleomorphic lobular carcinoma sample; somatic mutation." evidence="9">
    <original>G</original>
    <variation>E</variation>
    <location>
        <position position="541"/>
    </location>
</feature>
<feature type="mutagenesis site" description="Loss of autophosphorylation, kinase activity and of anti-apoptotic activity." evidence="8">
    <original>K</original>
    <variation>R</variation>
    <location>
        <position position="81"/>
    </location>
</feature>
<feature type="mutagenesis site" description="Prevents phosphorylation and activation by STK11/LKB1 complex." evidence="7">
    <original>T</original>
    <variation>A</variation>
    <location>
        <position position="208"/>
    </location>
</feature>
<gene>
    <name evidence="13" type="primary">NUAK2</name>
    <name type="synonym">OMPHK2</name>
    <name type="synonym">SNARK</name>
</gene>
<evidence type="ECO:0000250" key="1">
    <source>
        <dbReference type="UniProtKB" id="O60285"/>
    </source>
</evidence>
<evidence type="ECO:0000250" key="2">
    <source>
        <dbReference type="UniProtKB" id="Q8BZN4"/>
    </source>
</evidence>
<evidence type="ECO:0000255" key="3">
    <source>
        <dbReference type="PROSITE-ProRule" id="PRU00159"/>
    </source>
</evidence>
<evidence type="ECO:0000255" key="4">
    <source>
        <dbReference type="PROSITE-ProRule" id="PRU10027"/>
    </source>
</evidence>
<evidence type="ECO:0000256" key="5">
    <source>
        <dbReference type="SAM" id="MobiDB-lite"/>
    </source>
</evidence>
<evidence type="ECO:0000269" key="6">
    <source>
    </source>
</evidence>
<evidence type="ECO:0000269" key="7">
    <source>
    </source>
</evidence>
<evidence type="ECO:0000269" key="8">
    <source>
    </source>
</evidence>
<evidence type="ECO:0000269" key="9">
    <source>
    </source>
</evidence>
<evidence type="ECO:0000269" key="10">
    <source>
    </source>
</evidence>
<evidence type="ECO:0000269" key="11">
    <source>
    </source>
</evidence>
<evidence type="ECO:0000305" key="12"/>
<evidence type="ECO:0000312" key="13">
    <source>
        <dbReference type="EMBL" id="AAH17306.1"/>
    </source>
</evidence>
<evidence type="ECO:0000312" key="14">
    <source>
        <dbReference type="EMBL" id="BAC11234.1"/>
    </source>
</evidence>
<evidence type="ECO:0000312" key="15">
    <source>
        <dbReference type="EMBL" id="CAB66825.1"/>
    </source>
</evidence>
<evidence type="ECO:0007744" key="16">
    <source>
    </source>
</evidence>
<evidence type="ECO:0007744" key="17">
    <source>
    </source>
</evidence>
<dbReference type="EC" id="2.7.11.1"/>
<dbReference type="EMBL" id="AL136891">
    <property type="protein sequence ID" value="CAB66825.1"/>
    <property type="molecule type" value="mRNA"/>
</dbReference>
<dbReference type="EMBL" id="AK074830">
    <property type="protein sequence ID" value="BAC11234.1"/>
    <property type="molecule type" value="mRNA"/>
</dbReference>
<dbReference type="EMBL" id="BC017306">
    <property type="protein sequence ID" value="AAH17306.1"/>
    <property type="molecule type" value="mRNA"/>
</dbReference>
<dbReference type="CCDS" id="CCDS1453.3"/>
<dbReference type="RefSeq" id="NP_112214.3">
    <property type="nucleotide sequence ID" value="NM_030952.3"/>
</dbReference>
<dbReference type="SMR" id="Q9H093"/>
<dbReference type="BioGRID" id="123581">
    <property type="interactions" value="49"/>
</dbReference>
<dbReference type="FunCoup" id="Q9H093">
    <property type="interactions" value="112"/>
</dbReference>
<dbReference type="IntAct" id="Q9H093">
    <property type="interactions" value="43"/>
</dbReference>
<dbReference type="STRING" id="9606.ENSP00000499251"/>
<dbReference type="BindingDB" id="Q9H093"/>
<dbReference type="ChEMBL" id="CHEMBL5698"/>
<dbReference type="DrugBank" id="DB11936">
    <property type="generic name" value="Bempedoic acid"/>
</dbReference>
<dbReference type="DrugBank" id="DB12010">
    <property type="generic name" value="Fostamatinib"/>
</dbReference>
<dbReference type="DrugCentral" id="Q9H093"/>
<dbReference type="GuidetoPHARMACOLOGY" id="2130"/>
<dbReference type="GlyGen" id="Q9H093">
    <property type="glycosylation" value="2 sites, 1 O-linked glycan (1 site)"/>
</dbReference>
<dbReference type="iPTMnet" id="Q9H093"/>
<dbReference type="PhosphoSitePlus" id="Q9H093"/>
<dbReference type="BioMuta" id="NUAK2"/>
<dbReference type="DMDM" id="74761376"/>
<dbReference type="CPTAC" id="CPTAC-2844"/>
<dbReference type="CPTAC" id="non-CPTAC-2947"/>
<dbReference type="jPOST" id="Q9H093"/>
<dbReference type="MassIVE" id="Q9H093"/>
<dbReference type="PaxDb" id="9606-ENSP00000356125"/>
<dbReference type="PeptideAtlas" id="Q9H093"/>
<dbReference type="ProteomicsDB" id="80220"/>
<dbReference type="Antibodypedia" id="2090">
    <property type="antibodies" value="267 antibodies from 30 providers"/>
</dbReference>
<dbReference type="DNASU" id="81788"/>
<dbReference type="Ensembl" id="ENST00000367157.6">
    <property type="protein sequence ID" value="ENSP00000356125.5"/>
    <property type="gene ID" value="ENSG00000163545.11"/>
</dbReference>
<dbReference type="GeneID" id="81788"/>
<dbReference type="KEGG" id="hsa:81788"/>
<dbReference type="MANE-Select" id="ENST00000367157.6">
    <property type="protein sequence ID" value="ENSP00000356125.5"/>
    <property type="RefSeq nucleotide sequence ID" value="NM_030952.3"/>
    <property type="RefSeq protein sequence ID" value="NP_112214.3"/>
</dbReference>
<dbReference type="UCSC" id="uc001hce.4">
    <property type="organism name" value="human"/>
</dbReference>
<dbReference type="AGR" id="HGNC:29558"/>
<dbReference type="CTD" id="81788"/>
<dbReference type="DisGeNET" id="81788"/>
<dbReference type="GeneCards" id="NUAK2"/>
<dbReference type="HGNC" id="HGNC:29558">
    <property type="gene designation" value="NUAK2"/>
</dbReference>
<dbReference type="HPA" id="ENSG00000163545">
    <property type="expression patterns" value="Tissue enhanced (esophagus, vagina)"/>
</dbReference>
<dbReference type="MalaCards" id="NUAK2"/>
<dbReference type="MIM" id="608131">
    <property type="type" value="gene"/>
</dbReference>
<dbReference type="MIM" id="619452">
    <property type="type" value="phenotype"/>
</dbReference>
<dbReference type="neXtProt" id="NX_Q9H093"/>
<dbReference type="OpenTargets" id="ENSG00000163545"/>
<dbReference type="Orphanet" id="563609">
    <property type="disease" value="Isolated anencephaly"/>
</dbReference>
<dbReference type="PharmGKB" id="PA142671243"/>
<dbReference type="VEuPathDB" id="HostDB:ENSG00000163545"/>
<dbReference type="eggNOG" id="KOG0611">
    <property type="taxonomic scope" value="Eukaryota"/>
</dbReference>
<dbReference type="GeneTree" id="ENSGT00940000158422"/>
<dbReference type="HOGENOM" id="CLU_000288_63_42_1"/>
<dbReference type="InParanoid" id="Q9H093"/>
<dbReference type="OMA" id="RPLMKKQ"/>
<dbReference type="OrthoDB" id="193931at2759"/>
<dbReference type="PAN-GO" id="Q9H093">
    <property type="GO annotations" value="5 GO annotations based on evolutionary models"/>
</dbReference>
<dbReference type="PhylomeDB" id="Q9H093"/>
<dbReference type="TreeFam" id="TF324572"/>
<dbReference type="PathwayCommons" id="Q9H093"/>
<dbReference type="SignaLink" id="Q9H093"/>
<dbReference type="SIGNOR" id="Q9H093"/>
<dbReference type="BioGRID-ORCS" id="81788">
    <property type="hits" value="14 hits in 1190 CRISPR screens"/>
</dbReference>
<dbReference type="CD-CODE" id="804901D1">
    <property type="entry name" value="Nuclear speckle"/>
</dbReference>
<dbReference type="ChiTaRS" id="NUAK2">
    <property type="organism name" value="human"/>
</dbReference>
<dbReference type="GeneWiki" id="NUAK2"/>
<dbReference type="GenomeRNAi" id="81788"/>
<dbReference type="Pharos" id="Q9H093">
    <property type="development level" value="Tchem"/>
</dbReference>
<dbReference type="PRO" id="PR:Q9H093"/>
<dbReference type="Proteomes" id="UP000005640">
    <property type="component" value="Chromosome 1"/>
</dbReference>
<dbReference type="RNAct" id="Q9H093">
    <property type="molecule type" value="protein"/>
</dbReference>
<dbReference type="Bgee" id="ENSG00000163545">
    <property type="expression patterns" value="Expressed in cervix squamous epithelium and 144 other cell types or tissues"/>
</dbReference>
<dbReference type="GO" id="GO:0005524">
    <property type="term" value="F:ATP binding"/>
    <property type="evidence" value="ECO:0000314"/>
    <property type="project" value="UniProtKB"/>
</dbReference>
<dbReference type="GO" id="GO:0000287">
    <property type="term" value="F:magnesium ion binding"/>
    <property type="evidence" value="ECO:0000314"/>
    <property type="project" value="UniProtKB"/>
</dbReference>
<dbReference type="GO" id="GO:0106310">
    <property type="term" value="F:protein serine kinase activity"/>
    <property type="evidence" value="ECO:0007669"/>
    <property type="project" value="RHEA"/>
</dbReference>
<dbReference type="GO" id="GO:0004674">
    <property type="term" value="F:protein serine/threonine kinase activity"/>
    <property type="evidence" value="ECO:0000314"/>
    <property type="project" value="UniProtKB"/>
</dbReference>
<dbReference type="GO" id="GO:0030036">
    <property type="term" value="P:actin cytoskeleton organization"/>
    <property type="evidence" value="ECO:0000314"/>
    <property type="project" value="UniProtKB"/>
</dbReference>
<dbReference type="GO" id="GO:0006915">
    <property type="term" value="P:apoptotic process"/>
    <property type="evidence" value="ECO:0007669"/>
    <property type="project" value="UniProtKB-KW"/>
</dbReference>
<dbReference type="GO" id="GO:0042149">
    <property type="term" value="P:cellular response to glucose starvation"/>
    <property type="evidence" value="ECO:0000314"/>
    <property type="project" value="UniProtKB"/>
</dbReference>
<dbReference type="GO" id="GO:0043066">
    <property type="term" value="P:negative regulation of apoptotic process"/>
    <property type="evidence" value="ECO:0000314"/>
    <property type="project" value="UniProtKB"/>
</dbReference>
<dbReference type="GO" id="GO:0034504">
    <property type="term" value="P:protein localization to nucleus"/>
    <property type="evidence" value="ECO:0000315"/>
    <property type="project" value="UniProtKB"/>
</dbReference>
<dbReference type="GO" id="GO:0006468">
    <property type="term" value="P:protein phosphorylation"/>
    <property type="evidence" value="ECO:0000314"/>
    <property type="project" value="UniProtKB"/>
</dbReference>
<dbReference type="GO" id="GO:0035330">
    <property type="term" value="P:regulation of hippo signaling"/>
    <property type="evidence" value="ECO:0000315"/>
    <property type="project" value="UniProtKB"/>
</dbReference>
<dbReference type="CDD" id="cd14161">
    <property type="entry name" value="STKc_NUAK2"/>
    <property type="match status" value="1"/>
</dbReference>
<dbReference type="FunFam" id="3.30.200.20:FF:000042">
    <property type="entry name" value="Aurora kinase A"/>
    <property type="match status" value="1"/>
</dbReference>
<dbReference type="FunFam" id="1.10.510.10:FF:000226">
    <property type="entry name" value="NUAK family SNF1-like kinase 1"/>
    <property type="match status" value="1"/>
</dbReference>
<dbReference type="Gene3D" id="1.10.510.10">
    <property type="entry name" value="Transferase(Phosphotransferase) domain 1"/>
    <property type="match status" value="1"/>
</dbReference>
<dbReference type="InterPro" id="IPR011009">
    <property type="entry name" value="Kinase-like_dom_sf"/>
</dbReference>
<dbReference type="InterPro" id="IPR000719">
    <property type="entry name" value="Prot_kinase_dom"/>
</dbReference>
<dbReference type="InterPro" id="IPR017441">
    <property type="entry name" value="Protein_kinase_ATP_BS"/>
</dbReference>
<dbReference type="InterPro" id="IPR008271">
    <property type="entry name" value="Ser/Thr_kinase_AS"/>
</dbReference>
<dbReference type="PANTHER" id="PTHR24346">
    <property type="entry name" value="MAP/MICROTUBULE AFFINITY-REGULATING KINASE"/>
    <property type="match status" value="1"/>
</dbReference>
<dbReference type="PANTHER" id="PTHR24346:SF93">
    <property type="entry name" value="NUAK FAMILY SNF1-LIKE KINASE 1"/>
    <property type="match status" value="1"/>
</dbReference>
<dbReference type="Pfam" id="PF00069">
    <property type="entry name" value="Pkinase"/>
    <property type="match status" value="1"/>
</dbReference>
<dbReference type="SMART" id="SM00220">
    <property type="entry name" value="S_TKc"/>
    <property type="match status" value="1"/>
</dbReference>
<dbReference type="SUPFAM" id="SSF56112">
    <property type="entry name" value="Protein kinase-like (PK-like)"/>
    <property type="match status" value="1"/>
</dbReference>
<dbReference type="PROSITE" id="PS00107">
    <property type="entry name" value="PROTEIN_KINASE_ATP"/>
    <property type="match status" value="1"/>
</dbReference>
<dbReference type="PROSITE" id="PS50011">
    <property type="entry name" value="PROTEIN_KINASE_DOM"/>
    <property type="match status" value="1"/>
</dbReference>
<dbReference type="PROSITE" id="PS00108">
    <property type="entry name" value="PROTEIN_KINASE_ST"/>
    <property type="match status" value="1"/>
</dbReference>
<keyword id="KW-0007">Acetylation</keyword>
<keyword id="KW-0053">Apoptosis</keyword>
<keyword id="KW-0067">ATP-binding</keyword>
<keyword id="KW-0903">Direct protein sequencing</keyword>
<keyword id="KW-0225">Disease variant</keyword>
<keyword id="KW-0418">Kinase</keyword>
<keyword id="KW-0460">Magnesium</keyword>
<keyword id="KW-0479">Metal-binding</keyword>
<keyword id="KW-0547">Nucleotide-binding</keyword>
<keyword id="KW-0597">Phosphoprotein</keyword>
<keyword id="KW-1267">Proteomics identification</keyword>
<keyword id="KW-1185">Reference proteome</keyword>
<keyword id="KW-0723">Serine/threonine-protein kinase</keyword>
<keyword id="KW-0808">Transferase</keyword>
<sequence>MESLVFARRSGPTPSAAELARPLAEGLIKSPKPLMKKQAVKRHHHKHNLRHRYEFLETLGKGTYGKVKKARESSGRLVAIKSIRKDKIKDEQDLMHIRREIEIMSSLNHPHIIAIHEVFENSSKIVIVMEYASRGDLYDYISERQQLSEREARHFFRQIVSAVHYCHQNRVVHRDLKLENILLDANGNIKIADFGLSNLYHQGKFLQTFCGSPLYASPEIVNGKPYTGPEVDSWSLGVLLYILVHGTMPFDGHDHKILVKQISNGAYREPPKPSDACGLIRWLLMVNPTRRATLEDVASHWWVNWGYATRVGEQEAPHEGGHPGSDSARASMADWLRRSSRPLLENGAKVCSFFKQHAPGGGSTTPGLERQHSLKKSRKENDMAQSLHSDTADDTAHRPGKSNLKLPKGILKKKVSASAEGVQEDPPELSPIPASPGQAAPLLPKKGILKKPRQRESGYYSSPEPSESGELLDAGDVFVSGDPKEQKPPQASGLLLHRKGILKLNGKFSQTALELAAPTTFGSLDELAPPRPLARASRPSGAVSEDSILSSESFDQLDLPERLPEPPLRGCVSVDNLTGLEEPPSEGPGSCLRRWRQDPLGDSCFSLTDCQEVTATYRQALRVCSKLT</sequence>
<name>NUAK2_HUMAN</name>
<reference evidence="12" key="1">
    <citation type="journal article" date="2004" name="EMBO J.">
        <title>LKB1 is a master kinase that activates 13 kinases of the AMPK subfamily, including MARK/PAR-1.</title>
        <authorList>
            <person name="Lizcano J.M."/>
            <person name="Goeransson O."/>
            <person name="Toth R."/>
            <person name="Deak M."/>
            <person name="Morrice N.A."/>
            <person name="Boudeau J."/>
            <person name="Hawley S.A."/>
            <person name="Udd L."/>
            <person name="Maekelae T.P."/>
            <person name="Hardie D.G."/>
            <person name="Alessi D.R."/>
        </authorList>
    </citation>
    <scope>NUCLEOTIDE SEQUENCE [MRNA]</scope>
    <scope>PROTEIN SEQUENCE OF 205-224</scope>
    <scope>FUNCTION</scope>
    <scope>ACTIVITY REGULATION</scope>
    <scope>PHOSPHORYLATION AT THR-208</scope>
    <scope>MUTAGENESIS OF THR-208</scope>
</reference>
<reference evidence="12 15" key="2">
    <citation type="journal article" date="2001" name="Genome Res.">
        <title>Towards a catalog of human genes and proteins: sequencing and analysis of 500 novel complete protein coding human cDNAs.</title>
        <authorList>
            <person name="Wiemann S."/>
            <person name="Weil B."/>
            <person name="Wellenreuther R."/>
            <person name="Gassenhuber J."/>
            <person name="Glassl S."/>
            <person name="Ansorge W."/>
            <person name="Boecher M."/>
            <person name="Bloecker H."/>
            <person name="Bauersachs S."/>
            <person name="Blum H."/>
            <person name="Lauber J."/>
            <person name="Duesterhoeft A."/>
            <person name="Beyer A."/>
            <person name="Koehrer K."/>
            <person name="Strack N."/>
            <person name="Mewes H.-W."/>
            <person name="Ottenwaelder B."/>
            <person name="Obermaier B."/>
            <person name="Tampe J."/>
            <person name="Heubner D."/>
            <person name="Wambutt R."/>
            <person name="Korn B."/>
            <person name="Klein M."/>
            <person name="Poustka A."/>
        </authorList>
    </citation>
    <scope>NUCLEOTIDE SEQUENCE [LARGE SCALE MRNA]</scope>
    <source>
        <tissue evidence="15">Testis</tissue>
    </source>
</reference>
<reference evidence="12 14" key="3">
    <citation type="journal article" date="2004" name="Nat. Genet.">
        <title>Complete sequencing and characterization of 21,243 full-length human cDNAs.</title>
        <authorList>
            <person name="Ota T."/>
            <person name="Suzuki Y."/>
            <person name="Nishikawa T."/>
            <person name="Otsuki T."/>
            <person name="Sugiyama T."/>
            <person name="Irie R."/>
            <person name="Wakamatsu A."/>
            <person name="Hayashi K."/>
            <person name="Sato H."/>
            <person name="Nagai K."/>
            <person name="Kimura K."/>
            <person name="Makita H."/>
            <person name="Sekine M."/>
            <person name="Obayashi M."/>
            <person name="Nishi T."/>
            <person name="Shibahara T."/>
            <person name="Tanaka T."/>
            <person name="Ishii S."/>
            <person name="Yamamoto J."/>
            <person name="Saito K."/>
            <person name="Kawai Y."/>
            <person name="Isono Y."/>
            <person name="Nakamura Y."/>
            <person name="Nagahari K."/>
            <person name="Murakami K."/>
            <person name="Yasuda T."/>
            <person name="Iwayanagi T."/>
            <person name="Wagatsuma M."/>
            <person name="Shiratori A."/>
            <person name="Sudo H."/>
            <person name="Hosoiri T."/>
            <person name="Kaku Y."/>
            <person name="Kodaira H."/>
            <person name="Kondo H."/>
            <person name="Sugawara M."/>
            <person name="Takahashi M."/>
            <person name="Kanda K."/>
            <person name="Yokoi T."/>
            <person name="Furuya T."/>
            <person name="Kikkawa E."/>
            <person name="Omura Y."/>
            <person name="Abe K."/>
            <person name="Kamihara K."/>
            <person name="Katsuta N."/>
            <person name="Sato K."/>
            <person name="Tanikawa M."/>
            <person name="Yamazaki M."/>
            <person name="Ninomiya K."/>
            <person name="Ishibashi T."/>
            <person name="Yamashita H."/>
            <person name="Murakawa K."/>
            <person name="Fujimori K."/>
            <person name="Tanai H."/>
            <person name="Kimata M."/>
            <person name="Watanabe M."/>
            <person name="Hiraoka S."/>
            <person name="Chiba Y."/>
            <person name="Ishida S."/>
            <person name="Ono Y."/>
            <person name="Takiguchi S."/>
            <person name="Watanabe S."/>
            <person name="Yosida M."/>
            <person name="Hotuta T."/>
            <person name="Kusano J."/>
            <person name="Kanehori K."/>
            <person name="Takahashi-Fujii A."/>
            <person name="Hara H."/>
            <person name="Tanase T.-O."/>
            <person name="Nomura Y."/>
            <person name="Togiya S."/>
            <person name="Komai F."/>
            <person name="Hara R."/>
            <person name="Takeuchi K."/>
            <person name="Arita M."/>
            <person name="Imose N."/>
            <person name="Musashino K."/>
            <person name="Yuuki H."/>
            <person name="Oshima A."/>
            <person name="Sasaki N."/>
            <person name="Aotsuka S."/>
            <person name="Yoshikawa Y."/>
            <person name="Matsunawa H."/>
            <person name="Ichihara T."/>
            <person name="Shiohata N."/>
            <person name="Sano S."/>
            <person name="Moriya S."/>
            <person name="Momiyama H."/>
            <person name="Satoh N."/>
            <person name="Takami S."/>
            <person name="Terashima Y."/>
            <person name="Suzuki O."/>
            <person name="Nakagawa S."/>
            <person name="Senoh A."/>
            <person name="Mizoguchi H."/>
            <person name="Goto Y."/>
            <person name="Shimizu F."/>
            <person name="Wakebe H."/>
            <person name="Hishigaki H."/>
            <person name="Watanabe T."/>
            <person name="Sugiyama A."/>
            <person name="Takemoto M."/>
            <person name="Kawakami B."/>
            <person name="Yamazaki M."/>
            <person name="Watanabe K."/>
            <person name="Kumagai A."/>
            <person name="Itakura S."/>
            <person name="Fukuzumi Y."/>
            <person name="Fujimori Y."/>
            <person name="Komiyama M."/>
            <person name="Tashiro H."/>
            <person name="Tanigami A."/>
            <person name="Fujiwara T."/>
            <person name="Ono T."/>
            <person name="Yamada K."/>
            <person name="Fujii Y."/>
            <person name="Ozaki K."/>
            <person name="Hirao M."/>
            <person name="Ohmori Y."/>
            <person name="Kawabata A."/>
            <person name="Hikiji T."/>
            <person name="Kobatake N."/>
            <person name="Inagaki H."/>
            <person name="Ikema Y."/>
            <person name="Okamoto S."/>
            <person name="Okitani R."/>
            <person name="Kawakami T."/>
            <person name="Noguchi S."/>
            <person name="Itoh T."/>
            <person name="Shigeta K."/>
            <person name="Senba T."/>
            <person name="Matsumura K."/>
            <person name="Nakajima Y."/>
            <person name="Mizuno T."/>
            <person name="Morinaga M."/>
            <person name="Sasaki M."/>
            <person name="Togashi T."/>
            <person name="Oyama M."/>
            <person name="Hata H."/>
            <person name="Watanabe M."/>
            <person name="Komatsu T."/>
            <person name="Mizushima-Sugano J."/>
            <person name="Satoh T."/>
            <person name="Shirai Y."/>
            <person name="Takahashi Y."/>
            <person name="Nakagawa K."/>
            <person name="Okumura K."/>
            <person name="Nagase T."/>
            <person name="Nomura N."/>
            <person name="Kikuchi H."/>
            <person name="Masuho Y."/>
            <person name="Yamashita R."/>
            <person name="Nakai K."/>
            <person name="Yada T."/>
            <person name="Nakamura Y."/>
            <person name="Ohara O."/>
            <person name="Isogai T."/>
            <person name="Sugano S."/>
        </authorList>
    </citation>
    <scope>NUCLEOTIDE SEQUENCE [LARGE SCALE MRNA]</scope>
    <source>
        <tissue evidence="14">Teratocarcinoma</tissue>
    </source>
</reference>
<reference evidence="13" key="4">
    <citation type="journal article" date="2004" name="Genome Res.">
        <title>The status, quality, and expansion of the NIH full-length cDNA project: the Mammalian Gene Collection (MGC).</title>
        <authorList>
            <consortium name="The MGC Project Team"/>
        </authorList>
    </citation>
    <scope>NUCLEOTIDE SEQUENCE [LARGE SCALE MRNA]</scope>
    <source>
        <tissue evidence="13">Lymph</tissue>
    </source>
</reference>
<reference evidence="12" key="5">
    <citation type="journal article" date="2003" name="Biochem. Biophys. Res. Commun.">
        <title>Induction of cell-cell detachment during glucose starvation through F-actin conversion by SNARK, the fourth member of the AMP-activated protein kinase catalytic subunit family.</title>
        <authorList>
            <person name="Suzuki A."/>
            <person name="Kusakai G."/>
            <person name="Kishimoto A."/>
            <person name="Minegichi Y."/>
            <person name="Ogura T."/>
            <person name="Esumi H."/>
        </authorList>
    </citation>
    <scope>FUNCTION</scope>
</reference>
<reference evidence="12" key="6">
    <citation type="journal article" date="2004" name="J. Biol. Chem.">
        <title>Identification of SNF1/AMP kinase-related kinase as an NF-kappaB-regulated anti-apoptotic kinase involved in CD95-induced motility and invasiveness.</title>
        <authorList>
            <person name="Legembre P."/>
            <person name="Schickel R."/>
            <person name="Barnhart B.C."/>
            <person name="Peter M.E."/>
        </authorList>
    </citation>
    <scope>FUNCTION</scope>
    <scope>AUTOPHOSPHORYLATION</scope>
    <scope>MUTAGENESIS OF LYS-81</scope>
</reference>
<reference key="7">
    <citation type="journal article" date="2009" name="Mol. Cell. Proteomics">
        <title>Large-scale proteomics analysis of the human kinome.</title>
        <authorList>
            <person name="Oppermann F.S."/>
            <person name="Gnad F."/>
            <person name="Olsen J.V."/>
            <person name="Hornberger R."/>
            <person name="Greff Z."/>
            <person name="Keri G."/>
            <person name="Mann M."/>
            <person name="Daub H."/>
        </authorList>
    </citation>
    <scope>PHOSPHORYLATION [LARGE SCALE ANALYSIS] AT SER-435; SER-523; SER-544 AND SER-547</scope>
    <scope>IDENTIFICATION BY MASS SPECTROMETRY [LARGE SCALE ANALYSIS]</scope>
</reference>
<reference key="8">
    <citation type="journal article" date="2010" name="EMBO J.">
        <title>Regulation of ploidy and senescence by the AMPK-related kinase NUAK1.</title>
        <authorList>
            <person name="Humbert N."/>
            <person name="Navaratnam N."/>
            <person name="Augert A."/>
            <person name="Da Costa M."/>
            <person name="Martien S."/>
            <person name="Wang J."/>
            <person name="Martinez D."/>
            <person name="Abbadie C."/>
            <person name="Carling D."/>
            <person name="de Launoit Y."/>
            <person name="Gil J."/>
            <person name="Bernard D."/>
        </authorList>
    </citation>
    <scope>FUNCTION</scope>
</reference>
<reference key="9">
    <citation type="journal article" date="2012" name="Proc. Natl. Acad. Sci. U.S.A.">
        <title>N-terminal acetylome analyses and functional insights of the N-terminal acetyltransferase NatB.</title>
        <authorList>
            <person name="Van Damme P."/>
            <person name="Lasa M."/>
            <person name="Polevoda B."/>
            <person name="Gazquez C."/>
            <person name="Elosegui-Artola A."/>
            <person name="Kim D.S."/>
            <person name="De Juan-Pardo E."/>
            <person name="Demeyer K."/>
            <person name="Hole K."/>
            <person name="Larrea E."/>
            <person name="Timmerman E."/>
            <person name="Prieto J."/>
            <person name="Arnesen T."/>
            <person name="Sherman F."/>
            <person name="Gevaert K."/>
            <person name="Aldabe R."/>
        </authorList>
    </citation>
    <scope>ACETYLATION [LARGE SCALE ANALYSIS] AT MET-1</scope>
    <scope>IDENTIFICATION BY MASS SPECTROMETRY [LARGE SCALE ANALYSIS]</scope>
</reference>
<reference key="10">
    <citation type="journal article" date="2020" name="J. Exp. Med.">
        <title>A loss-of-function NUAK2 mutation in humans causes anencephaly due to impaired Hippo-YAP signaling.</title>
        <authorList>
            <person name="Bonnard C."/>
            <person name="Navaratnam N."/>
            <person name="Ghosh K."/>
            <person name="Chan P.W."/>
            <person name="Tan T.T."/>
            <person name="Pomp O."/>
            <person name="Ng A.Y.J."/>
            <person name="Tohari S."/>
            <person name="Changede R."/>
            <person name="Carling D."/>
            <person name="Venkatesh B."/>
            <person name="Altunoglu U."/>
            <person name="Kayserili H."/>
            <person name="Reversade B."/>
        </authorList>
    </citation>
    <scope>INVOLVEMENT IN ANPH2</scope>
    <scope>VARIANT ANPH2 138-TYR--GLN-145 DELINS GLU</scope>
    <scope>CHARACTERIZATION OF VARIANT ANPH2 138-TYR--GLN-145 DELINS GLU</scope>
    <scope>FUNCTION</scope>
    <scope>PHOSPHORYLATION AT THR-208</scope>
</reference>
<reference key="11">
    <citation type="journal article" date="2007" name="Nature">
        <title>Patterns of somatic mutation in human cancer genomes.</title>
        <authorList>
            <person name="Greenman C."/>
            <person name="Stephens P."/>
            <person name="Smith R."/>
            <person name="Dalgliesh G.L."/>
            <person name="Hunter C."/>
            <person name="Bignell G."/>
            <person name="Davies H."/>
            <person name="Teague J."/>
            <person name="Butler A."/>
            <person name="Stevens C."/>
            <person name="Edkins S."/>
            <person name="O'Meara S."/>
            <person name="Vastrik I."/>
            <person name="Schmidt E.E."/>
            <person name="Avis T."/>
            <person name="Barthorpe S."/>
            <person name="Bhamra G."/>
            <person name="Buck G."/>
            <person name="Choudhury B."/>
            <person name="Clements J."/>
            <person name="Cole J."/>
            <person name="Dicks E."/>
            <person name="Forbes S."/>
            <person name="Gray K."/>
            <person name="Halliday K."/>
            <person name="Harrison R."/>
            <person name="Hills K."/>
            <person name="Hinton J."/>
            <person name="Jenkinson A."/>
            <person name="Jones D."/>
            <person name="Menzies A."/>
            <person name="Mironenko T."/>
            <person name="Perry J."/>
            <person name="Raine K."/>
            <person name="Richardson D."/>
            <person name="Shepherd R."/>
            <person name="Small A."/>
            <person name="Tofts C."/>
            <person name="Varian J."/>
            <person name="Webb T."/>
            <person name="West S."/>
            <person name="Widaa S."/>
            <person name="Yates A."/>
            <person name="Cahill D.P."/>
            <person name="Louis D.N."/>
            <person name="Goldstraw P."/>
            <person name="Nicholson A.G."/>
            <person name="Brasseur F."/>
            <person name="Looijenga L."/>
            <person name="Weber B.L."/>
            <person name="Chiew Y.-E."/>
            <person name="DeFazio A."/>
            <person name="Greaves M.F."/>
            <person name="Green A.R."/>
            <person name="Campbell P."/>
            <person name="Birney E."/>
            <person name="Easton D.F."/>
            <person name="Chenevix-Trench G."/>
            <person name="Tan M.-H."/>
            <person name="Khoo S.K."/>
            <person name="Teh B.T."/>
            <person name="Yuen S.T."/>
            <person name="Leung S.Y."/>
            <person name="Wooster R."/>
            <person name="Futreal P.A."/>
            <person name="Stratton M.R."/>
        </authorList>
    </citation>
    <scope>VARIANTS [LARGE SCALE ANALYSIS] SER-309; LEU-341; ARG-503; VAL-516 AND GLU-541</scope>
</reference>
<organism>
    <name type="scientific">Homo sapiens</name>
    <name type="common">Human</name>
    <dbReference type="NCBI Taxonomy" id="9606"/>
    <lineage>
        <taxon>Eukaryota</taxon>
        <taxon>Metazoa</taxon>
        <taxon>Chordata</taxon>
        <taxon>Craniata</taxon>
        <taxon>Vertebrata</taxon>
        <taxon>Euteleostomi</taxon>
        <taxon>Mammalia</taxon>
        <taxon>Eutheria</taxon>
        <taxon>Euarchontoglires</taxon>
        <taxon>Primates</taxon>
        <taxon>Haplorrhini</taxon>
        <taxon>Catarrhini</taxon>
        <taxon>Hominidae</taxon>
        <taxon>Homo</taxon>
    </lineage>
</organism>
<accession>Q9H093</accession>
<protein>
    <recommendedName>
        <fullName>NUAK family SNF1-like kinase 2</fullName>
        <ecNumber>2.7.11.1</ecNumber>
    </recommendedName>
    <alternativeName>
        <fullName>Omphalocele kinase 2</fullName>
    </alternativeName>
    <alternativeName>
        <fullName>SNF1/AMP kinase-related kinase</fullName>
        <shortName>SNARK</shortName>
    </alternativeName>
</protein>